<gene>
    <name type="primary">Tet1</name>
    <name type="synonym">Cxxc6</name>
    <name type="synonym">Kiaa1676</name>
</gene>
<proteinExistence type="evidence at protein level"/>
<feature type="chain" id="PRO_0000377549" description="Methylcytosine dioxygenase TET1">
    <location>
        <begin position="1"/>
        <end position="2039"/>
    </location>
</feature>
<feature type="zinc finger region" description="CXXC-type" evidence="3">
    <location>
        <begin position="567"/>
        <end position="608"/>
    </location>
</feature>
<feature type="region of interest" description="Disordered" evidence="4">
    <location>
        <begin position="1"/>
        <end position="79"/>
    </location>
</feature>
<feature type="region of interest" description="Disordered" evidence="4">
    <location>
        <begin position="119"/>
        <end position="168"/>
    </location>
</feature>
<feature type="region of interest" description="Disordered" evidence="4">
    <location>
        <begin position="227"/>
        <end position="286"/>
    </location>
</feature>
<feature type="region of interest" description="Sufficient for binding to genomic CpG islands" evidence="1">
    <location>
        <begin position="512"/>
        <end position="657"/>
    </location>
</feature>
<feature type="region of interest" description="Disordered" evidence="4">
    <location>
        <begin position="613"/>
        <end position="670"/>
    </location>
</feature>
<feature type="region of interest" description="Disordered" evidence="4">
    <location>
        <begin position="711"/>
        <end position="735"/>
    </location>
</feature>
<feature type="region of interest" description="Disordered" evidence="4">
    <location>
        <begin position="820"/>
        <end position="859"/>
    </location>
</feature>
<feature type="region of interest" description="Disordered" evidence="4">
    <location>
        <begin position="882"/>
        <end position="906"/>
    </location>
</feature>
<feature type="region of interest" description="Disordered" evidence="4">
    <location>
        <begin position="964"/>
        <end position="993"/>
    </location>
</feature>
<feature type="region of interest" description="Disordered" evidence="4">
    <location>
        <begin position="1050"/>
        <end position="1129"/>
    </location>
</feature>
<feature type="region of interest" description="Disordered" evidence="4">
    <location>
        <begin position="1209"/>
        <end position="1240"/>
    </location>
</feature>
<feature type="region of interest" description="Disordered" evidence="4">
    <location>
        <begin position="1322"/>
        <end position="1341"/>
    </location>
</feature>
<feature type="region of interest" description="Interaction with DNA" evidence="1">
    <location>
        <begin position="1528"/>
        <end position="1541"/>
    </location>
</feature>
<feature type="region of interest" description="Disordered" evidence="4">
    <location>
        <begin position="1734"/>
        <end position="1760"/>
    </location>
</feature>
<feature type="region of interest" description="Disordered" evidence="4">
    <location>
        <begin position="1830"/>
        <end position="1901"/>
    </location>
</feature>
<feature type="compositionally biased region" description="Basic residues" evidence="4">
    <location>
        <begin position="1"/>
        <end position="19"/>
    </location>
</feature>
<feature type="compositionally biased region" description="Basic and acidic residues" evidence="4">
    <location>
        <begin position="53"/>
        <end position="65"/>
    </location>
</feature>
<feature type="compositionally biased region" description="Basic and acidic residues" evidence="4">
    <location>
        <begin position="138"/>
        <end position="149"/>
    </location>
</feature>
<feature type="compositionally biased region" description="Polar residues" evidence="4">
    <location>
        <begin position="150"/>
        <end position="168"/>
    </location>
</feature>
<feature type="compositionally biased region" description="Polar residues" evidence="4">
    <location>
        <begin position="241"/>
        <end position="265"/>
    </location>
</feature>
<feature type="compositionally biased region" description="Basic and acidic residues" evidence="4">
    <location>
        <begin position="653"/>
        <end position="670"/>
    </location>
</feature>
<feature type="compositionally biased region" description="Polar residues" evidence="4">
    <location>
        <begin position="825"/>
        <end position="835"/>
    </location>
</feature>
<feature type="compositionally biased region" description="Basic and acidic residues" evidence="4">
    <location>
        <begin position="840"/>
        <end position="852"/>
    </location>
</feature>
<feature type="compositionally biased region" description="Low complexity" evidence="4">
    <location>
        <begin position="884"/>
        <end position="894"/>
    </location>
</feature>
<feature type="compositionally biased region" description="Basic and acidic residues" evidence="4">
    <location>
        <begin position="895"/>
        <end position="904"/>
    </location>
</feature>
<feature type="compositionally biased region" description="Polar residues" evidence="4">
    <location>
        <begin position="1053"/>
        <end position="1064"/>
    </location>
</feature>
<feature type="compositionally biased region" description="Basic residues" evidence="4">
    <location>
        <begin position="1094"/>
        <end position="1116"/>
    </location>
</feature>
<feature type="compositionally biased region" description="Polar residues" evidence="4">
    <location>
        <begin position="1214"/>
        <end position="1227"/>
    </location>
</feature>
<feature type="compositionally biased region" description="Polar residues" evidence="4">
    <location>
        <begin position="1326"/>
        <end position="1341"/>
    </location>
</feature>
<feature type="compositionally biased region" description="Basic residues" evidence="4">
    <location>
        <begin position="1734"/>
        <end position="1743"/>
    </location>
</feature>
<feature type="compositionally biased region" description="Low complexity" evidence="4">
    <location>
        <begin position="1748"/>
        <end position="1760"/>
    </location>
</feature>
<feature type="compositionally biased region" description="Polar residues" evidence="4">
    <location>
        <begin position="1850"/>
        <end position="1875"/>
    </location>
</feature>
<feature type="compositionally biased region" description="Basic and acidic residues" evidence="4">
    <location>
        <begin position="1880"/>
        <end position="1895"/>
    </location>
</feature>
<feature type="binding site" evidence="3">
    <location>
        <position position="574"/>
    </location>
    <ligand>
        <name>Zn(2+)</name>
        <dbReference type="ChEBI" id="CHEBI:29105"/>
        <label>1</label>
    </ligand>
</feature>
<feature type="binding site" evidence="3">
    <location>
        <position position="577"/>
    </location>
    <ligand>
        <name>Zn(2+)</name>
        <dbReference type="ChEBI" id="CHEBI:29105"/>
        <label>1</label>
    </ligand>
</feature>
<feature type="binding site" evidence="3">
    <location>
        <position position="580"/>
    </location>
    <ligand>
        <name>Zn(2+)</name>
        <dbReference type="ChEBI" id="CHEBI:29105"/>
        <label>1</label>
    </ligand>
</feature>
<feature type="binding site" evidence="3">
    <location>
        <position position="586"/>
    </location>
    <ligand>
        <name>Zn(2+)</name>
        <dbReference type="ChEBI" id="CHEBI:29105"/>
        <label>2</label>
    </ligand>
</feature>
<feature type="binding site" evidence="3">
    <location>
        <position position="589"/>
    </location>
    <ligand>
        <name>Zn(2+)</name>
        <dbReference type="ChEBI" id="CHEBI:29105"/>
        <label>2</label>
    </ligand>
</feature>
<feature type="binding site" evidence="3">
    <location>
        <position position="592"/>
    </location>
    <ligand>
        <name>Zn(2+)</name>
        <dbReference type="ChEBI" id="CHEBI:29105"/>
        <label>2</label>
    </ligand>
</feature>
<feature type="binding site" evidence="3">
    <location>
        <position position="602"/>
    </location>
    <ligand>
        <name>Zn(2+)</name>
        <dbReference type="ChEBI" id="CHEBI:29105"/>
        <label>2</label>
    </ligand>
</feature>
<feature type="binding site" evidence="3">
    <location>
        <position position="607"/>
    </location>
    <ligand>
        <name>Zn(2+)</name>
        <dbReference type="ChEBI" id="CHEBI:29105"/>
        <label>1</label>
    </ligand>
</feature>
<feature type="binding site" evidence="1">
    <location>
        <position position="1371"/>
    </location>
    <ligand>
        <name>Zn(2+)</name>
        <dbReference type="ChEBI" id="CHEBI:29105"/>
        <label>3</label>
    </ligand>
</feature>
<feature type="binding site" evidence="1">
    <location>
        <position position="1373"/>
    </location>
    <ligand>
        <name>Zn(2+)</name>
        <dbReference type="ChEBI" id="CHEBI:29105"/>
        <label>3</label>
    </ligand>
</feature>
<feature type="binding site" evidence="1">
    <location>
        <position position="1430"/>
    </location>
    <ligand>
        <name>Zn(2+)</name>
        <dbReference type="ChEBI" id="CHEBI:29105"/>
        <label>4</label>
    </ligand>
</feature>
<feature type="binding site" evidence="1">
    <location>
        <position position="1456"/>
    </location>
    <ligand>
        <name>Zn(2+)</name>
        <dbReference type="ChEBI" id="CHEBI:29105"/>
        <label>1</label>
    </ligand>
</feature>
<feature type="binding site" evidence="1">
    <location>
        <position position="1458"/>
    </location>
    <ligand>
        <name>Zn(2+)</name>
        <dbReference type="ChEBI" id="CHEBI:29105"/>
        <label>3</label>
    </ligand>
</feature>
<feature type="binding site" evidence="1">
    <location>
        <position position="1499"/>
    </location>
    <ligand>
        <name>2-oxoglutarate</name>
        <dbReference type="ChEBI" id="CHEBI:16810"/>
    </ligand>
</feature>
<feature type="binding site" evidence="1">
    <location>
        <position position="1509"/>
    </location>
    <ligand>
        <name>Zn(2+)</name>
        <dbReference type="ChEBI" id="CHEBI:29105"/>
        <label>4</label>
    </ligand>
</feature>
<feature type="binding site" evidence="1">
    <location>
        <position position="1511"/>
    </location>
    <ligand>
        <name>Zn(2+)</name>
        <dbReference type="ChEBI" id="CHEBI:29105"/>
        <label>4</label>
    </ligand>
</feature>
<feature type="binding site" evidence="1">
    <location>
        <position position="1527"/>
    </location>
    <ligand>
        <name>Zn(2+)</name>
        <dbReference type="ChEBI" id="CHEBI:29105"/>
        <label>3</label>
    </ligand>
</feature>
<feature type="binding site" evidence="1">
    <location>
        <position position="1536"/>
    </location>
    <ligand>
        <name>Zn(2+)</name>
        <dbReference type="ChEBI" id="CHEBI:29105"/>
        <label>3</label>
    </ligand>
</feature>
<feature type="binding site" evidence="1">
    <location>
        <position position="1628"/>
    </location>
    <ligand>
        <name>Zn(2+)</name>
        <dbReference type="ChEBI" id="CHEBI:29105"/>
        <label>3</label>
    </ligand>
</feature>
<feature type="binding site" evidence="1">
    <location>
        <position position="1644"/>
    </location>
    <ligand>
        <name>2-oxoglutarate</name>
        <dbReference type="ChEBI" id="CHEBI:16810"/>
    </ligand>
</feature>
<feature type="binding site" evidence="1">
    <location>
        <position position="1650"/>
    </location>
    <ligand>
        <name>Zn(2+)</name>
        <dbReference type="ChEBI" id="CHEBI:29105"/>
        <label>2</label>
    </ligand>
</feature>
<feature type="binding site" evidence="1">
    <location>
        <position position="1652"/>
    </location>
    <ligand>
        <name>Fe cation</name>
        <dbReference type="ChEBI" id="CHEBI:24875"/>
        <note>catalytic</note>
    </ligand>
</feature>
<feature type="binding site" evidence="1">
    <location>
        <position position="1654"/>
    </location>
    <ligand>
        <name>Fe cation</name>
        <dbReference type="ChEBI" id="CHEBI:24875"/>
        <note>catalytic</note>
    </ligand>
</feature>
<feature type="binding site" evidence="1">
    <location>
        <position position="1657"/>
    </location>
    <ligand>
        <name>substrate</name>
    </ligand>
</feature>
<feature type="binding site" evidence="1">
    <location>
        <position position="1685"/>
    </location>
    <ligand>
        <name>2-oxoglutarate</name>
        <dbReference type="ChEBI" id="CHEBI:16810"/>
    </ligand>
</feature>
<feature type="binding site" evidence="1">
    <location>
        <position position="1939"/>
    </location>
    <ligand>
        <name>Fe cation</name>
        <dbReference type="ChEBI" id="CHEBI:24875"/>
        <note>catalytic</note>
    </ligand>
</feature>
<feature type="binding site" evidence="1">
    <location>
        <begin position="1954"/>
        <end position="1956"/>
    </location>
    <ligand>
        <name>2-oxoglutarate</name>
        <dbReference type="ChEBI" id="CHEBI:16810"/>
    </ligand>
</feature>
<feature type="binding site" evidence="1">
    <location>
        <begin position="1960"/>
        <end position="1962"/>
    </location>
    <ligand>
        <name>substrate</name>
    </ligand>
</feature>
<feature type="binding site" evidence="1">
    <location>
        <position position="1970"/>
    </location>
    <ligand>
        <name>Zn(2+)</name>
        <dbReference type="ChEBI" id="CHEBI:29105"/>
        <label>3</label>
    </ligand>
</feature>
<feature type="modified residue" description="Phosphoserine" evidence="2">
    <location>
        <position position="854"/>
    </location>
</feature>
<feature type="cross-link" description="Glycyl lysine isopeptide (Lys-Gly) (interchain with G-Cter in ubiquitin)" evidence="28">
    <location>
        <position position="1537"/>
    </location>
</feature>
<feature type="splice variant" id="VSP_061830" description="In isoform 2." evidence="29">
    <location>
        <begin position="1"/>
        <end position="654"/>
    </location>
</feature>
<feature type="mutagenesis site" description="Decreased levels of ubiquitination in isoform 2; loss of isoform 2 localization to sites of ongoing DNA replication in heterochromatic regions; does not affect interaction with CRL4(VprBP) ubiquitin ligase complex. Loss of DNA-binding and of 5-methylcytosine demethylase activity in vivo. Does not affect nuclear localization." evidence="16 28">
    <original>K</original>
    <variation>E</variation>
    <location>
        <position position="1537"/>
    </location>
</feature>
<feature type="mutagenesis site" description="Strongly reduces ubiquitination, loss of DNA-binding and of 5-methylcytosine demethylase activity in vivo. Does not affect nuclear localization." evidence="16">
    <original>K</original>
    <variation>N</variation>
    <location>
        <position position="1537"/>
    </location>
</feature>
<feature type="mutagenesis site" description="Decreased levels of ubiquitination in isoform 2; loss of isoform 2 localization to sites of ongoing DNA replication in heterochromatic regions; does not affect interaction with CRL4(VprBP) ubiquitin ligase complex." evidence="28">
    <original>K</original>
    <variation>R</variation>
    <location>
        <position position="1537"/>
    </location>
</feature>
<feature type="mutagenesis site" description="Loss of catalytic activity; when associated with A-1654. Does not affect chromocenter clustering; when associated with A-1654. Does not affect interaction with DCAF1; when associated with A-1654. In isoform 2, does not affect localization to heterochromatin in late S-phase; when associated with A-1654." evidence="5 10 16 27">
    <original>H</original>
    <variation>Y</variation>
    <location>
        <position position="1652"/>
    </location>
</feature>
<feature type="mutagenesis site" description="Loss of catalytic activity; when associated with Y-1652. Does not affect chromocenter clustering; when associated with A-1654; when associated with Y-1652. Does not affect interaction with DCAF1; when associated with Y-1652. In isoform 2, does not affect localization to heterochromatin in late S-phase; when associated with Y-1652." evidence="5 10 16 27">
    <original>D</original>
    <variation>A</variation>
    <location>
        <position position="1654"/>
    </location>
</feature>
<feature type="sequence conflict" description="In Ref. 1; ACY38291." evidence="31" ref="1">
    <original>H</original>
    <variation>Y</variation>
    <location>
        <position position="223"/>
    </location>
</feature>
<feature type="sequence conflict" description="In Ref. 1; ACY38291." evidence="31" ref="1">
    <original>N</original>
    <variation>Y</variation>
    <location>
        <position position="827"/>
    </location>
</feature>
<dbReference type="EC" id="1.14.11.80" evidence="5 10"/>
<dbReference type="EMBL" id="GU079948">
    <property type="protein sequence ID" value="ACY38291.1"/>
    <property type="molecule type" value="mRNA"/>
</dbReference>
<dbReference type="EMBL" id="AC166359">
    <property type="status" value="NOT_ANNOTATED_CDS"/>
    <property type="molecule type" value="Genomic_DNA"/>
</dbReference>
<dbReference type="EMBL" id="AK010953">
    <property type="protein sequence ID" value="BAB27288.1"/>
    <property type="status" value="ALT_INIT"/>
    <property type="molecule type" value="mRNA"/>
</dbReference>
<dbReference type="EMBL" id="AK141438">
    <property type="protein sequence ID" value="BAE24685.1"/>
    <property type="status" value="ALT_SEQ"/>
    <property type="molecule type" value="mRNA"/>
</dbReference>
<dbReference type="EMBL" id="AK129421">
    <property type="protein sequence ID" value="BAC98231.1"/>
    <property type="status" value="ALT_SEQ"/>
    <property type="molecule type" value="Transcribed_RNA"/>
</dbReference>
<dbReference type="CCDS" id="CCDS56706.1">
    <molecule id="Q3URK3-1"/>
</dbReference>
<dbReference type="RefSeq" id="NP_001240786.1">
    <molecule id="Q3URK3-1"/>
    <property type="nucleotide sequence ID" value="NM_001253857.2"/>
</dbReference>
<dbReference type="RefSeq" id="NP_001393311.1">
    <molecule id="Q3URK3-2"/>
    <property type="nucleotide sequence ID" value="NM_001406382.1"/>
</dbReference>
<dbReference type="RefSeq" id="XP_011241811.1">
    <property type="nucleotide sequence ID" value="XM_011243509.2"/>
</dbReference>
<dbReference type="SMR" id="Q3URK3"/>
<dbReference type="BioGRID" id="206599">
    <property type="interactions" value="15"/>
</dbReference>
<dbReference type="ComplexPortal" id="CPX-3441">
    <property type="entry name" value="SIN3A histone deacetylase complex, ES cell-specific variant"/>
</dbReference>
<dbReference type="FunCoup" id="Q3URK3">
    <property type="interactions" value="1802"/>
</dbReference>
<dbReference type="IntAct" id="Q3URK3">
    <property type="interactions" value="10"/>
</dbReference>
<dbReference type="MINT" id="Q3URK3"/>
<dbReference type="STRING" id="10090.ENSMUSP00000133279"/>
<dbReference type="BindingDB" id="Q3URK3"/>
<dbReference type="ChEMBL" id="CHEMBL5465312"/>
<dbReference type="GlyGen" id="Q3URK3">
    <property type="glycosylation" value="23 sites, 1 O-linked glycan (22 sites)"/>
</dbReference>
<dbReference type="iPTMnet" id="Q3URK3"/>
<dbReference type="PhosphoSitePlus" id="Q3URK3"/>
<dbReference type="PaxDb" id="10090-ENSMUSP00000133279"/>
<dbReference type="PeptideAtlas" id="Q3URK3"/>
<dbReference type="ProteomicsDB" id="262871"/>
<dbReference type="ProteomicsDB" id="314467"/>
<dbReference type="Antibodypedia" id="14634">
    <property type="antibodies" value="358 antibodies from 30 providers"/>
</dbReference>
<dbReference type="Ensembl" id="ENSMUST00000174189.2">
    <molecule id="Q3URK3-1"/>
    <property type="protein sequence ID" value="ENSMUSP00000133279.2"/>
    <property type="gene ID" value="ENSMUSG00000047146.18"/>
</dbReference>
<dbReference type="GeneID" id="52463"/>
<dbReference type="KEGG" id="mmu:52463"/>
<dbReference type="UCSC" id="uc007fje.2">
    <molecule id="Q3URK3-1"/>
    <property type="organism name" value="mouse"/>
</dbReference>
<dbReference type="AGR" id="MGI:1098693"/>
<dbReference type="CTD" id="80312"/>
<dbReference type="MGI" id="MGI:1098693">
    <property type="gene designation" value="Tet1"/>
</dbReference>
<dbReference type="VEuPathDB" id="HostDB:ENSMUSG00000047146"/>
<dbReference type="eggNOG" id="ENOG502QURD">
    <property type="taxonomic scope" value="Eukaryota"/>
</dbReference>
<dbReference type="GeneTree" id="ENSGT00940000158935"/>
<dbReference type="InParanoid" id="Q3URK3"/>
<dbReference type="OrthoDB" id="8854879at2759"/>
<dbReference type="PhylomeDB" id="Q3URK3"/>
<dbReference type="BioGRID-ORCS" id="52463">
    <property type="hits" value="0 hits in 83 CRISPR screens"/>
</dbReference>
<dbReference type="ChiTaRS" id="Tet1">
    <property type="organism name" value="mouse"/>
</dbReference>
<dbReference type="PRO" id="PR:Q3URK3"/>
<dbReference type="Proteomes" id="UP000000589">
    <property type="component" value="Chromosome 10"/>
</dbReference>
<dbReference type="RNAct" id="Q3URK3">
    <property type="molecule type" value="protein"/>
</dbReference>
<dbReference type="Bgee" id="ENSMUSG00000047146">
    <property type="expression patterns" value="Expressed in trophoblast giant cell and 224 other cell types or tissues"/>
</dbReference>
<dbReference type="ExpressionAtlas" id="Q3URK3">
    <property type="expression patterns" value="baseline and differential"/>
</dbReference>
<dbReference type="GO" id="GO:0005654">
    <property type="term" value="C:nucleoplasm"/>
    <property type="evidence" value="ECO:0000304"/>
    <property type="project" value="Reactome"/>
</dbReference>
<dbReference type="GO" id="GO:0005634">
    <property type="term" value="C:nucleus"/>
    <property type="evidence" value="ECO:0000314"/>
    <property type="project" value="UniProtKB"/>
</dbReference>
<dbReference type="GO" id="GO:0070822">
    <property type="term" value="C:Sin3-type complex"/>
    <property type="evidence" value="ECO:0000303"/>
    <property type="project" value="ComplexPortal"/>
</dbReference>
<dbReference type="GO" id="GO:0070579">
    <property type="term" value="F:5-methylcytosine dioxygenase activity"/>
    <property type="evidence" value="ECO:0000314"/>
    <property type="project" value="UniProtKB"/>
</dbReference>
<dbReference type="GO" id="GO:0003677">
    <property type="term" value="F:DNA binding"/>
    <property type="evidence" value="ECO:0000250"/>
    <property type="project" value="UniProtKB"/>
</dbReference>
<dbReference type="GO" id="GO:0005506">
    <property type="term" value="F:iron ion binding"/>
    <property type="evidence" value="ECO:0000250"/>
    <property type="project" value="UniProtKB"/>
</dbReference>
<dbReference type="GO" id="GO:0008327">
    <property type="term" value="F:methyl-CpG binding"/>
    <property type="evidence" value="ECO:0000250"/>
    <property type="project" value="UniProtKB"/>
</dbReference>
<dbReference type="GO" id="GO:0000978">
    <property type="term" value="F:RNA polymerase II cis-regulatory region sequence-specific DNA binding"/>
    <property type="evidence" value="ECO:0000314"/>
    <property type="project" value="ARUK-UCL"/>
</dbReference>
<dbReference type="GO" id="GO:0008270">
    <property type="term" value="F:zinc ion binding"/>
    <property type="evidence" value="ECO:0000250"/>
    <property type="project" value="UniProtKB"/>
</dbReference>
<dbReference type="GO" id="GO:0006338">
    <property type="term" value="P:chromatin remodeling"/>
    <property type="evidence" value="ECO:0000250"/>
    <property type="project" value="UniProtKB"/>
</dbReference>
<dbReference type="GO" id="GO:0141167">
    <property type="term" value="P:chromosomal 5-methylcytosine DNA demethylation, oxidation pathway"/>
    <property type="evidence" value="ECO:0007669"/>
    <property type="project" value="InterPro"/>
</dbReference>
<dbReference type="GO" id="GO:0048813">
    <property type="term" value="P:dendrite morphogenesis"/>
    <property type="evidence" value="ECO:0000315"/>
    <property type="project" value="CACAO"/>
</dbReference>
<dbReference type="GO" id="GO:0044727">
    <property type="term" value="P:epigenetic programing of male pronucleus"/>
    <property type="evidence" value="ECO:0000315"/>
    <property type="project" value="MGI"/>
</dbReference>
<dbReference type="GO" id="GO:0001826">
    <property type="term" value="P:inner cell mass cell differentiation"/>
    <property type="evidence" value="ECO:0000315"/>
    <property type="project" value="UniProtKB"/>
</dbReference>
<dbReference type="GO" id="GO:0030336">
    <property type="term" value="P:negative regulation of cell migration"/>
    <property type="evidence" value="ECO:0000303"/>
    <property type="project" value="ComplexPortal"/>
</dbReference>
<dbReference type="GO" id="GO:1902455">
    <property type="term" value="P:negative regulation of stem cell population maintenance"/>
    <property type="evidence" value="ECO:0000303"/>
    <property type="project" value="ComplexPortal"/>
</dbReference>
<dbReference type="GO" id="GO:0000122">
    <property type="term" value="P:negative regulation of transcription by RNA polymerase II"/>
    <property type="evidence" value="ECO:0000303"/>
    <property type="project" value="ComplexPortal"/>
</dbReference>
<dbReference type="GO" id="GO:0030512">
    <property type="term" value="P:negative regulation of transforming growth factor beta receptor signaling pathway"/>
    <property type="evidence" value="ECO:0000303"/>
    <property type="project" value="ComplexPortal"/>
</dbReference>
<dbReference type="GO" id="GO:0044029">
    <property type="term" value="P:positive regulation of gene expression via chromosomal CpG island demethylation"/>
    <property type="evidence" value="ECO:0000314"/>
    <property type="project" value="MGI"/>
</dbReference>
<dbReference type="GO" id="GO:1902459">
    <property type="term" value="P:positive regulation of stem cell population maintenance"/>
    <property type="evidence" value="ECO:0000303"/>
    <property type="project" value="ComplexPortal"/>
</dbReference>
<dbReference type="GO" id="GO:0045944">
    <property type="term" value="P:positive regulation of transcription by RNA polymerase II"/>
    <property type="evidence" value="ECO:0000315"/>
    <property type="project" value="UniProtKB"/>
</dbReference>
<dbReference type="GO" id="GO:0006493">
    <property type="term" value="P:protein O-linked glycosylation"/>
    <property type="evidence" value="ECO:0000315"/>
    <property type="project" value="UniProtKB"/>
</dbReference>
<dbReference type="GO" id="GO:0019827">
    <property type="term" value="P:stem cell population maintenance"/>
    <property type="evidence" value="ECO:0000315"/>
    <property type="project" value="UniProtKB"/>
</dbReference>
<dbReference type="InterPro" id="IPR024779">
    <property type="entry name" value="2OGFeDO_JBP1/TET_oxygenase_dom"/>
</dbReference>
<dbReference type="InterPro" id="IPR040175">
    <property type="entry name" value="TET1/2/3"/>
</dbReference>
<dbReference type="InterPro" id="IPR046942">
    <property type="entry name" value="TET_oxygenase"/>
</dbReference>
<dbReference type="InterPro" id="IPR002857">
    <property type="entry name" value="Znf_CXXC"/>
</dbReference>
<dbReference type="PANTHER" id="PTHR23358">
    <property type="entry name" value="METHYLCYTOSINE DIOXYGENASE TET"/>
    <property type="match status" value="1"/>
</dbReference>
<dbReference type="PANTHER" id="PTHR23358:SF2">
    <property type="entry name" value="METHYLCYTOSINE DIOXYGENASE TET1"/>
    <property type="match status" value="1"/>
</dbReference>
<dbReference type="Pfam" id="PF12851">
    <property type="entry name" value="Tet_JBP"/>
    <property type="match status" value="1"/>
</dbReference>
<dbReference type="Pfam" id="PF02008">
    <property type="entry name" value="zf-CXXC"/>
    <property type="match status" value="1"/>
</dbReference>
<dbReference type="SMART" id="SM01333">
    <property type="entry name" value="Tet_JBP"/>
    <property type="match status" value="1"/>
</dbReference>
<dbReference type="PROSITE" id="PS51058">
    <property type="entry name" value="ZF_CXXC"/>
    <property type="match status" value="1"/>
</dbReference>
<organism>
    <name type="scientific">Mus musculus</name>
    <name type="common">Mouse</name>
    <dbReference type="NCBI Taxonomy" id="10090"/>
    <lineage>
        <taxon>Eukaryota</taxon>
        <taxon>Metazoa</taxon>
        <taxon>Chordata</taxon>
        <taxon>Craniata</taxon>
        <taxon>Vertebrata</taxon>
        <taxon>Euteleostomi</taxon>
        <taxon>Mammalia</taxon>
        <taxon>Eutheria</taxon>
        <taxon>Euarchontoglires</taxon>
        <taxon>Glires</taxon>
        <taxon>Rodentia</taxon>
        <taxon>Myomorpha</taxon>
        <taxon>Muroidea</taxon>
        <taxon>Muridae</taxon>
        <taxon>Murinae</taxon>
        <taxon>Mus</taxon>
        <taxon>Mus</taxon>
    </lineage>
</organism>
<sequence>MSRSRPAKPSKSVKTKLQKKKDIQMKTKTSKQAVRHGASAKAVNPGKPKQLIKRRDGKKETEDKTPTPAPSFLTRAGAARMNRDRNQVLFQNPDSLTCNGFTMALRRTSLSWRLSQRPVVTPKPKKVPPSKKQCTHNIQDEPGVKHSENDSVPSQHATVSPGTENGEQNRCLVEGESQEITQSCPVFEERIEDTQSCISASGNLEAEISWPLEGTHCEELLSHQTSDNECTSPQECAPLPQRSTSEVTSQKNTSNQLADLSSQVESIKLSDPSPNPTGSDHNGFPDSSFRIVPELDLKTCMPLDESVYPTALIRFILAGSQPDVFDTKPQEKTLITTPEQVGSHPNQVLDATSVLGQAFSTLPLQWGFSGANLVQVEALGKGSDSPEDLGAITMLNQQETVAMDMDRNATPDLPIFLPKPPNTVATYSSPLLGPEPHSSTSCGLEVQGATPILTLDSGHTPQLPPNPESSSVPLVIAANGTRAEKQFGTSLFPAVPQGFTVAAENEVQHAPLDLTQGSQAAPSKLEGEISRVSITGSADVKATAMSMPVTQASTSSPPCNSTPPMVERRKRKACGVCEPCQQKANCGECTYCKNRKNSHQICKKRKCEVLKKKPEATSQAQVTKENKRPQREKKPKVLKTDFNNKPVNGPKSESMDCSRRGHGEEEQRLDLITHPLENVRKNAGGMTGIEVEKWAPNKKSHLAEGQVKGSCDANLTGVENPQPSEDDKQQTNPSPTFAQTIRNGMKNVHCLPTDTHLPLNKLNHEEFSKALGNNSSKLLTDPSNCKDAMSVTTSGGECDHLKGPRNTLLFQKPGLNCRSGAEPTIFNNHPNTHSAGSRPHPPEKVPNKEPKDGSPVQPSLLSLMKDRRLTLEQVVAIEALTQLSEAPSESSSPSKPEKDEEAHQKTASLLNSCKAILHSVRKDLQDPNVQGKGLHHDTVVFNGQNRTFKSPDSFATNQALIKSQGYPSSPTAEKKGAAGGRAPFDGFENSHPLPIESHNLENCSQVLSCDQNLSSHDPSCQDAPYSQIEEDVAAQLTQLASTINHINAEVRNAESTPESLVAKNTKQKHSQEKRMVHQKPPSSTQTKPSVPSAKPKKAQKKARATPHANKRKKKPPARSSQENDQKKQEQLAIEYSKMHDIWMSSKFQRFGQSSPRSFPVLLRNIPVFNQILKPVTQSKTPSQHNELFPPINQIKFTRNPELAKEKVKVEPSDSLPTCQFKTESGGQTFAEPADNSQGQPMVSVNQEAHPLPQSPPSNQCANIMAGAAQTQFHLGAQENLVHQIPPPTLPGTSPDTLLPDPASILRKGKVLHFDGITVVTEKREAQTSSNGPLGPTTDSAQSEFKESIMDLLSKPAKNLIAGLKEQEAAPCDCDGGTQKEKGPYYTHLGAGPSVAAVRELMETRFGQKGKAIRIEKIVFTGKEGKSSQGCPVAKWVIRRSGPEEKLICLVRERVDHHCSTAVIVVLILLWEGIPRLMADRLYKELTENLRSYSGHPTDRRCTLNKKRTCTCQGIDPKTCGASFSFGCSWSMYFNGCKFGRSENPRKFRLAPNYPLHNYYKRITGMSSEGSDVKTGWIIPDRKTLISREEKQLEKNLQELATVLAPLYKQMAPVAYQNQVEYEEVAGDCRLGNEEGRPFSGVTCCMDFCAHSHKDIHNMHNGSTVVCTLIRADGRDTNCPEDEQLHVLPLYRLADTDEFGSVEGMKAKIKSGAIQVNGPTRKRRLRFTEPVPRCGKRAKMKQNHNKSGSHNTKSFSSASSTSHLVKDESTDFCPLQASSAETSTCTYSKTASGGFAETSSILHCTMPSGAHSGANAAAGECTGTVQPAEVAAHPHQSLPTADSPVHAEPLTSPSEQLTSNQSNQQLPLLSNSQKLASCQVEDERHPEADEPQHPEDDNLPQLDEFWSDSEEIYADPSFGGVAIAPIHGSVLIECARKELHATTSLRSPKRGVPFRVSLVFYQHKSLNKPNHGFDINKIKCKCKKVTKKKPADRECPDVSPEANLSHQIPSRVASTLTRDNVVTVSPYSLTHVAGPYNRWV</sequence>
<keyword id="KW-0010">Activator</keyword>
<keyword id="KW-0877">Alternative promoter usage</keyword>
<keyword id="KW-0156">Chromatin regulator</keyword>
<keyword id="KW-0158">Chromosome</keyword>
<keyword id="KW-0217">Developmental protein</keyword>
<keyword id="KW-0223">Dioxygenase</keyword>
<keyword id="KW-0238">DNA-binding</keyword>
<keyword id="KW-0325">Glycoprotein</keyword>
<keyword id="KW-0408">Iron</keyword>
<keyword id="KW-1017">Isopeptide bond</keyword>
<keyword id="KW-0479">Metal-binding</keyword>
<keyword id="KW-0539">Nucleus</keyword>
<keyword id="KW-0560">Oxidoreductase</keyword>
<keyword id="KW-0597">Phosphoprotein</keyword>
<keyword id="KW-1185">Reference proteome</keyword>
<keyword id="KW-0678">Repressor</keyword>
<keyword id="KW-0804">Transcription</keyword>
<keyword id="KW-0805">Transcription regulation</keyword>
<keyword id="KW-0832">Ubl conjugation</keyword>
<keyword id="KW-0862">Zinc</keyword>
<keyword id="KW-0863">Zinc-finger</keyword>
<accession>Q3URK3</accession>
<accession>D0VLQ4</accession>
<accession>E9Q9Y4</accession>
<accession>Q6ZPK2</accession>
<accession>Q9CY36</accession>
<comment type="function">
    <text evidence="2 5 6 7 8 9 10 11 12 15 18 22 23 24 26 27">Dioxygenase that plays a key role in active DNA demethylation, by catalyzing the sequential oxidation of the modified genomic base 5-methylcytosine (5mC) into 5-hydroxymethylcytosine (5hmC), 5-formylcytosine (5fC), and 5-carboxylcytosine (5caC) (PubMed:20639862, PubMed:21496894, PubMed:21778364). In addition to its role in DNA demethylation, plays a more general role in chromatin regulation by recruiting histone modifying protein complexes to alter histone marks and chromatin accessibility, leading to both activation and repression of gene expression (PubMed:28504700, PubMed:32286661). Plays therefore a role in many biological processes, including stem cell maintenance, T- and B-cell development, inflammation regulation, iron homeostasis, neural activity or DNA repair (PubMed:20639862, PubMed:31089182, PubMed:32855402, PubMed:33895792). Involved in the balance between pluripotency and lineage commitment of cells it plays a role in embryonic stem cells maintenance and inner cell mass cell specification (PubMed:20639862, PubMed:28504700). Together with QSER1, plays an essential role in the protection and maintenance of transcriptional and developmental programs to inhibit the binding of DNMT3A/3B and therefore de novo methylation (By similarity). May play a role in the pancreatic beta-cell specification during development. In this context, may function as an upstream epigenetic regulator of PAX4 presumably through direct recruitment by FOXA2 to a PAX4 enhancer to preserve its unmethylated status, thereby potentiating PAX4 expression to adopt beta-cell fate during endocrine lineage commitment (By similarity). Under DNA hypomethylation conditions, such as in female meiotic germ cells, may induce epigenetic reprogramming of pericentromeric heterochromatin (PCH), the constitutive heterochromatin of pericentromeric regions. PCH forms chromocenters in the interphase nucleus and chromocenters cluster at the prophase of meiosis. In this context, may also be essential for chromocenter clustering in a catalytic activity-independent manner, possibly through the recruitment polycomb repressive complex 1 (PRC1) to the chromocenters (PubMed:34166371). During embryonic development, may be required for normal meiotic progression in oocytes and meiotic gene activation (PubMed:23151479). Binds preferentially to DNA containing cytidine-phosphate-guanosine (CpG) dinucleotides over CpH (H=A, T, and C), hemimethylated-CpG and hemimethylated-hydroxymethyl-CpG (By similarity).</text>
</comment>
<comment type="function">
    <molecule>Isoform 1</molecule>
    <text evidence="17 25 28">Dioxygenase that plays a key role in active DNA demethylation (PubMed:27916660, PubMed:36056023). Binds to promoters, particularly to those with high CG content (PubMed:27916660). In hippocampal neurons, isoform 1 regulates the expression of a unique subset of genes compared to isoform 2, although some overlap between both isoforms, hence differentially regulates excitatory synaptic transmission (PubMed:33262245). In hippocampal neuron cell cultures, isoform 1 controls both miniature excitatory postsynaptic current amplitude and frequency (PubMed:33262245). Isoform 1 may regulate genes involved in hippocampal-dependent memory, leading to positive regulation of memory, contrary to isoform 2 that may decrease memory (PubMed:33262245).</text>
</comment>
<comment type="function">
    <molecule>Isoform 2</molecule>
    <text evidence="17 21 25 28">Dioxygenase that plays a key role in active DNA demethylation (PubMed:27916660, PubMed:36056023). As isoform 1, binds to promoters, particularly to those with high CG content, however displays reduced global chromatin affinity compared with isoform 1, leading to decreased global DNA demethylation compared with isoform 1 (PubMed:27916660). Contrary to isoform 1, isoform 2 localizes during S phase to sites of ongoing DNA replication in heterochromatin, causing a significant de novo 5hmC formation, globally, and more so in heterochromatin, including LINE 1 interspersed DNA repeats leading to their activation (PubMed:36056023). In hippocampal neurons, isoform 2 regulates the expression of a unique subset of genes compared with isoform 1, although some overlap between both isoforms, hence differentially regulating excitatory synaptic transmission (PubMed:33262245). In hippocampal neuron cell cultures, isoform 2 controls miniature excitatory postsynaptic current frequency, but not amplitude (PubMed:33262245). Isoform 2 may regulate genes involved in hippocampal-dependent memory, leading to negative regulation of memory, contrary to isoform 1 that may improve memory (PubMed:33262245). In immature and partially differentiated gonadotrope cells, represses luteinizing hormone gene LHB expression directly and does not catalyze 5hmC at the gene promoter (PubMed:28855337).</text>
</comment>
<comment type="catalytic activity">
    <reaction evidence="5 10">
        <text>a 5-methyl-2'-deoxycytidine in DNA + 2-oxoglutarate + O2 = a 5-hydroxymethyl-2'-deoxycytidine in DNA + succinate + CO2</text>
        <dbReference type="Rhea" id="RHEA:52636"/>
        <dbReference type="Rhea" id="RHEA-COMP:11370"/>
        <dbReference type="Rhea" id="RHEA-COMP:13315"/>
        <dbReference type="ChEBI" id="CHEBI:15379"/>
        <dbReference type="ChEBI" id="CHEBI:16526"/>
        <dbReference type="ChEBI" id="CHEBI:16810"/>
        <dbReference type="ChEBI" id="CHEBI:30031"/>
        <dbReference type="ChEBI" id="CHEBI:85454"/>
        <dbReference type="ChEBI" id="CHEBI:136731"/>
        <dbReference type="EC" id="1.14.11.80"/>
    </reaction>
</comment>
<comment type="catalytic activity">
    <reaction evidence="10">
        <text>a 5-hydroxymethyl-2'-deoxycytidine in DNA + 2-oxoglutarate + O2 = a 5-formyl-2'-deoxycytidine in DNA + succinate + CO2 + H2O</text>
        <dbReference type="Rhea" id="RHEA:53828"/>
        <dbReference type="Rhea" id="RHEA-COMP:13315"/>
        <dbReference type="Rhea" id="RHEA-COMP:13656"/>
        <dbReference type="ChEBI" id="CHEBI:15377"/>
        <dbReference type="ChEBI" id="CHEBI:15379"/>
        <dbReference type="ChEBI" id="CHEBI:16526"/>
        <dbReference type="ChEBI" id="CHEBI:16810"/>
        <dbReference type="ChEBI" id="CHEBI:30031"/>
        <dbReference type="ChEBI" id="CHEBI:136731"/>
        <dbReference type="ChEBI" id="CHEBI:137731"/>
        <dbReference type="EC" id="1.14.11.80"/>
    </reaction>
</comment>
<comment type="catalytic activity">
    <reaction evidence="10">
        <text>a 5-formyl-2'-deoxycytidine in DNA + 2-oxoglutarate + O2 = a 5-carboxyl-2'-deoxycytidine in DNA + succinate + CO2 + H(+)</text>
        <dbReference type="Rhea" id="RHEA:53832"/>
        <dbReference type="Rhea" id="RHEA-COMP:13656"/>
        <dbReference type="Rhea" id="RHEA-COMP:13657"/>
        <dbReference type="ChEBI" id="CHEBI:15378"/>
        <dbReference type="ChEBI" id="CHEBI:15379"/>
        <dbReference type="ChEBI" id="CHEBI:16526"/>
        <dbReference type="ChEBI" id="CHEBI:16810"/>
        <dbReference type="ChEBI" id="CHEBI:30031"/>
        <dbReference type="ChEBI" id="CHEBI:137731"/>
        <dbReference type="ChEBI" id="CHEBI:137732"/>
        <dbReference type="EC" id="1.14.11.80"/>
    </reaction>
</comment>
<comment type="cofactor">
    <cofactor evidence="1">
        <name>Fe(2+)</name>
        <dbReference type="ChEBI" id="CHEBI:29033"/>
    </cofactor>
    <text evidence="1">Binds 1 Fe(2+) ion per subunit.</text>
</comment>
<comment type="cofactor">
    <cofactor evidence="1">
        <name>Zn(2+)</name>
        <dbReference type="ChEBI" id="CHEBI:29105"/>
    </cofactor>
    <text evidence="1">Binds 3 zinc ions per subunit. The zinc ions have a structural role.</text>
</comment>
<comment type="subunit">
    <text evidence="2 7 12 17 20 23 27">Interacts with SIN3A; recruits the transcriptional co-repressor SIN3A to gene promoters (PubMed:21490601). Interacts with HCFC1 (PubMed:23352454). Interacts (via C-terminus) with OGT (PubMed:23352454, PubMed:27916660). Found in a complex composed of at least SINHCAF, SIN3A, HDAC1, SAP30, RBBP4, OGT and TET1 (PubMed:28554894). Interacts with QSER1 (By similarity). Interacts with NONO (via DNA-binding domain); this interaction recruits TET1 to genomic loci (PubMed:32286661). Interacts with FOXA2; this interaction may recruit TET1 to specific enhancers to preserve their unmethylated status and hence allowing gene expression (By similarity). Interacts with RNF2 (PubMed:34166371). Directly interacts (via C-terminus) with the DCAF1 component of the CRL4(VprBP) E3 ubiquitin-protein ligase complex (By similarity).</text>
</comment>
<comment type="subunit">
    <molecule>Isoform 2</molecule>
    <text evidence="28">Interacts with UHRF1; this interaction induces the recruitment of TET1 to replicating heterochromatin (PubMed:36056023). Interacts with DCAF1 (PubMed:36056023).</text>
</comment>
<comment type="interaction">
    <interactant intactId="EBI-4291699">
        <id>Q3URK3</id>
    </interactant>
    <interactant intactId="EBI-349034">
        <id>Q60520</id>
        <label>Sin3a</label>
    </interactant>
    <organismsDiffer>false</organismsDiffer>
    <experiments>2</experiments>
</comment>
<comment type="subcellular location">
    <subcellularLocation>
        <location evidence="16">Nucleus</location>
    </subcellularLocation>
    <subcellularLocation>
        <location evidence="23">Chromosome</location>
    </subcellularLocation>
</comment>
<comment type="subcellular location">
    <molecule>Isoform 1</molecule>
    <subcellularLocation>
        <location evidence="5 17 28">Nucleus</location>
    </subcellularLocation>
    <subcellularLocation>
        <location evidence="17">Chromosome</location>
    </subcellularLocation>
    <text evidence="28">Contrary to isoform 2, which accumulates at sites of ongoing DNA replication in heterochromatin, isoform 1 shows a homogenous nuclear pattern during mitotic S phase.</text>
</comment>
<comment type="subcellular location">
    <molecule>Isoform 2</molecule>
    <subcellularLocation>
        <location evidence="17 28">Nucleus</location>
    </subcellularLocation>
    <subcellularLocation>
        <location evidence="17">Chromosome</location>
    </subcellularLocation>
    <text evidence="28">During DNA replication, localizes to sites of ongoing DNA replication in heterochromatin (in late S phase) in an UHRF1- and CRL4(VprBP)-dependent manner, by ubiquitination of the conserved residue Lys-1537. Localization to heterochromatin is independent of catalytic activity.</text>
</comment>
<comment type="alternative products">
    <event type="alternative promoter"/>
    <isoform>
        <id>Q3URK3-1</id>
        <name>1</name>
        <name evidence="29">Tet1e</name>
        <name evidence="30">Tet-FL</name>
        <sequence type="displayed"/>
    </isoform>
    <isoform>
        <id>Q3URK3-2</id>
        <name>2</name>
        <name evidence="29 30">Tet1s</name>
        <name>TET1-ALT</name>
        <sequence type="described" ref="VSP_061830"/>
    </isoform>
    <text evidence="17">During development, a switch between isoforms 1 and 2 regulates DNA demethylation, imprint erasure and gene regulation. The switch may be controlled by alternative promoters.</text>
</comment>
<comment type="tissue specificity">
    <text evidence="14">Expressed in germinal vesicle (GV) stage and MII-stage oocytes and in early embryos (PubMed:24357321). Also detected somatic tissues, including brain, liver and kidney, but at very low levels (PubMed:24357321).</text>
</comment>
<comment type="tissue specificity">
    <molecule>Isoform 1</molecule>
    <text evidence="5 17 18 19 21 25">Predominantly expressed in early embryos. Also expressed in embryonic stem cells and in primordial germ cells (PubMed:20639862, PubMed:27916660, PubMed:28504700, PubMed:28531272, PubMed:28855337). Expressed in adult tissues, including brain cortex, cerebellum, heart, kidney, liver, muscle and spleen, although at much lower levels than isoform 2 (PubMed:28531272, PubMed:28855337, PubMed:33262245). In the brain, expressed at higher levels in glial cells than in neurons (PubMed:33262245). Expressed in placenta (PubMed:28855337). Expressed in the pituitary, most probably in thyrotropes (PubMed:28855337).</text>
</comment>
<comment type="tissue specificity">
    <molecule>Isoform 2</molecule>
    <text evidence="17 19 21 25">Preferentially expressed in differentiated cells, including in cerebral cortex, cerebellum and thymus (PubMed:27916660). Also expressed in heart, kidney, liver, muscle and spleen at much higher levels than isoform 1 (PubMed:28531272, PubMed:28855337, PubMed:33262245). In the brain, expressed at higher levels in neurons than in glial cells (PubMed:33262245). Expressed in the olfactory bulb and in the mammary gland (PubMed:28531272, PubMed:28855337).</text>
</comment>
<comment type="developmental stage">
    <text evidence="11 14">Expressed at high levels in germinal vesicle (GV) stage and MII-stage oocytes. Expression levels increase following fertilization and reach a peak at the 4-cell stage and decrease in morula and blastula (PubMed:24357321). During embryonic development, preferentially expressed in primordial germ cells, where strong expression is already detected at 10.5 dpc, a peak of expression is reached at 12.5 dpc, followed by a decrease, until 16.5 dpc. Compared to primordial germ cells, low expression levels are observed in somatic cells starting from 9.5 dpc with a slow increase until 16.5 dpc (PubMed:23151479).</text>
</comment>
<comment type="developmental stage">
    <molecule>Isoform 1</molecule>
    <text evidence="5 17 19">During development, a switch between isoforms 1 and 2 regulates epigenetic memory erasure. The switch is controlled by alternative promoters (PubMed:27916660, PubMed:28531272). Isoform 1 is expressed from the one-cell stage embryos until 14.5 dpc and is hardly detectable in most adult tissues (PubMed:20639862, PubMed:27916660, PubMed:28531272). At the blastocyst stage, enriched in the inner cell mass (at protein level) (PubMed:20639862). In cultured embryonic stem cells, during differentiation into neurons, highly expressed during the first 2 days. Expression then decreases until day 9 when the levels become hardly detectable and at which point expression of isoform 2 progressively increases (PubMed:27916660).</text>
</comment>
<comment type="developmental stage">
    <molecule>Isoform 2</molecule>
    <text evidence="17 19 21">During development, a switch between isoforms 1 and 2 regulates DNA demethylation, imprint erasure and gene regulation. The switch may be controlled by alternative promoters. Isoform 2 is hardly detectable in early embryos until 14.5 dpc, although some expression is seen in the brain already at 10.5 dpc, and is predominantly expressed in most adult tissues (PubMed:27916660, PubMed:28531272). In cultured embryonic stem cells, during differentiation into neurons, isoform 2 is undetectable during the first 7 days and then progressively increases (PubMed:27916660). Expressed in gonadotropic cells, with considerably higher levels in immature cells from 6 day old mice in which the gonadotrope population is expanding, than in the gonadotropic cells of adult, sexually mature animals (PubMed:28855337).</text>
</comment>
<comment type="induction">
    <molecule>Isoform 2</molecule>
    <text evidence="21 25">Down-regulated in response to hippocampal neuron stimulation, whereas isoform 1 transcript levels are unaffected (PubMed:33262245). Down-regulated by GNRH1 in pituitary cells from immature animals (PubMed:28855337). Down-regulated by gonadal steroids, including estradiol E2 and dihydrotestosterone DHT, in gonadotrope cells from immature animals (PubMed:28855337).</text>
</comment>
<comment type="domain">
    <text evidence="17 28">The CXXC zinc finger plays a role in TET1 chromatin loading and participates in binding to CpG-DNA. However, the global chromatin binding can be mediated by the entire N-terminus and occurs even in the absence of the CXXC domain (PubMed:27916660). The zinc finger domain impedes association DNA replication sites and prevents aberrant 5mC oxidation (PubMed:36056023).</text>
</comment>
<comment type="PTM">
    <text evidence="12">Glycosylated. Interaction with OGT leads to GlcNAcylation.</text>
</comment>
<comment type="PTM">
    <molecule>Isoform 2</molecule>
    <text evidence="28">Monoubiquitinated by the DCX (DDB1-CUL4-X-box) E3 ubiquitin-protein ligase complex called CRL4(VprBP) or CUL4A-RBX1-DDB1-DCAF1/VPRBP complex.</text>
</comment>
<comment type="PTM">
    <text evidence="16">Monoubiquitinated by the DCX (DDB1-CUL4-X-box) E3 ubiquitin-protein ligase complex called CRL4(VprBP) or CUL4A-RBX1-DDB1-DCAF1/VPRBP complex; this modification promotes binding to DNA.</text>
</comment>
<comment type="disease">
    <text evidence="15">Plays an important role in the tumorigenicity of glioblastoma cells. TET1-mediated production of 5hmC acts as a recruitment signal for the CHTOP-methylosome complex to selective sites on the chromosome, where it methylates H4R3 and activates the transcription of genes involved in glioblastoma genesis.</text>
</comment>
<comment type="disruption phenotype">
    <text evidence="11 13">No visible phenotype; mice are viable, fertile and grossly normal, although some mice have a slightly smaller body size at birth. Embryonic stem cells (ESCs) have reduced levels of 5-hydroxymethylcytosine (5hmC) and slight changes in global gene expression, but are pluripotent and support development. However, knockout mice have an altered response to iron overload (PubMed:33895792). In a different experimental setting, the number of viable knockout homozygous animals was shown to be only approximately one-third of the amount expected due to embryonic lethality (PubMed:23151479). In this setting, in female embryos, the size of the ovaries is smaller, with a reduced number of oocytes from 16.5 to 18.5 dpc, probably due to severely impaired meiotic progression and increased apoptosis (PubMed:23151479). Mice lacking both Tet1 and Tet2 are fertile, with females having smaller ovaries and reduced fertility. They display decreased 5hmC and abnormal methylation at various imprinted loci. ESCs lacking both Tet1 and Tet2 remain pluripotent but lack 5hmC, leading to developmental defects in chimeric embryos (PubMed:23352810).</text>
</comment>
<comment type="similarity">
    <text evidence="31">Belongs to the TET family.</text>
</comment>
<comment type="caution">
    <text evidence="32">Subsequent steps in cytosine demethylation are subject to discussion. According to a first model cytosine demethylation occurs through deamination of 5hmC into 5-hydroxymethyluracil (5hmU) and subsequent replacement by unmethylated cytosine by the base excision repair system (PubMed:21496894). According to another model, cytosine demethylation is rather mediated via conversion of 5hmC into 5fC and 5caC, followed by excision by TDG.</text>
</comment>
<comment type="sequence caution" evidence="31">
    <conflict type="erroneous initiation">
        <sequence resource="EMBL-CDS" id="BAB27288"/>
    </conflict>
    <text>Truncated N-terminus.</text>
</comment>
<comment type="sequence caution" evidence="31">
    <conflict type="miscellaneous discrepancy">
        <sequence resource="EMBL-CDS" id="BAC98231"/>
    </conflict>
</comment>
<comment type="sequence caution" evidence="31">
    <conflict type="miscellaneous discrepancy">
        <sequence resource="EMBL-CDS" id="BAE24685"/>
    </conflict>
</comment>
<evidence type="ECO:0000250" key="1">
    <source>
        <dbReference type="UniProtKB" id="Q6N021"/>
    </source>
</evidence>
<evidence type="ECO:0000250" key="2">
    <source>
        <dbReference type="UniProtKB" id="Q8NFU7"/>
    </source>
</evidence>
<evidence type="ECO:0000255" key="3">
    <source>
        <dbReference type="PROSITE-ProRule" id="PRU00509"/>
    </source>
</evidence>
<evidence type="ECO:0000256" key="4">
    <source>
        <dbReference type="SAM" id="MobiDB-lite"/>
    </source>
</evidence>
<evidence type="ECO:0000269" key="5">
    <source>
    </source>
</evidence>
<evidence type="ECO:0000269" key="6">
    <source>
    </source>
</evidence>
<evidence type="ECO:0000269" key="7">
    <source>
    </source>
</evidence>
<evidence type="ECO:0000269" key="8">
    <source>
    </source>
</evidence>
<evidence type="ECO:0000269" key="9">
    <source>
    </source>
</evidence>
<evidence type="ECO:0000269" key="10">
    <source>
    </source>
</evidence>
<evidence type="ECO:0000269" key="11">
    <source>
    </source>
</evidence>
<evidence type="ECO:0000269" key="12">
    <source>
    </source>
</evidence>
<evidence type="ECO:0000269" key="13">
    <source>
    </source>
</evidence>
<evidence type="ECO:0000269" key="14">
    <source>
    </source>
</evidence>
<evidence type="ECO:0000269" key="15">
    <source>
    </source>
</evidence>
<evidence type="ECO:0000269" key="16">
    <source>
    </source>
</evidence>
<evidence type="ECO:0000269" key="17">
    <source>
    </source>
</evidence>
<evidence type="ECO:0000269" key="18">
    <source>
    </source>
</evidence>
<evidence type="ECO:0000269" key="19">
    <source>
    </source>
</evidence>
<evidence type="ECO:0000269" key="20">
    <source>
    </source>
</evidence>
<evidence type="ECO:0000269" key="21">
    <source>
    </source>
</evidence>
<evidence type="ECO:0000269" key="22">
    <source>
    </source>
</evidence>
<evidence type="ECO:0000269" key="23">
    <source>
    </source>
</evidence>
<evidence type="ECO:0000269" key="24">
    <source>
    </source>
</evidence>
<evidence type="ECO:0000269" key="25">
    <source>
    </source>
</evidence>
<evidence type="ECO:0000269" key="26">
    <source>
    </source>
</evidence>
<evidence type="ECO:0000269" key="27">
    <source>
    </source>
</evidence>
<evidence type="ECO:0000269" key="28">
    <source>
    </source>
</evidence>
<evidence type="ECO:0000303" key="29">
    <source>
    </source>
</evidence>
<evidence type="ECO:0000303" key="30">
    <source>
    </source>
</evidence>
<evidence type="ECO:0000305" key="31"/>
<evidence type="ECO:0000305" key="32">
    <source>
    </source>
</evidence>
<reference key="1">
    <citation type="journal article" date="2010" name="Nature">
        <title>Role of Tet proteins in 5mC to 5hmC conversion, ES-cell self-renewal and inner cell mass specification.</title>
        <authorList>
            <person name="Ito S."/>
            <person name="D'Alessio A.C."/>
            <person name="Taranova O.V."/>
            <person name="Hong K."/>
            <person name="Sowers L.C."/>
            <person name="Zhang Y."/>
        </authorList>
    </citation>
    <scope>NUCLEOTIDE SEQUENCE [MRNA]</scope>
    <scope>FUNCTION</scope>
    <scope>CATALYTIC ACTIVITY</scope>
    <scope>SUBCELLULAR LOCATION</scope>
    <scope>TISSUE SPECIFICITY</scope>
    <scope>DEVELOPMENTAL STAGE</scope>
    <scope>MUTAGENESIS OF HIS-1652 AND ASP-1654</scope>
    <source>
        <strain>129/Ola</strain>
    </source>
</reference>
<reference key="2">
    <citation type="journal article" date="2009" name="PLoS Biol.">
        <title>Lineage-specific biology revealed by a finished genome assembly of the mouse.</title>
        <authorList>
            <person name="Church D.M."/>
            <person name="Goodstadt L."/>
            <person name="Hillier L.W."/>
            <person name="Zody M.C."/>
            <person name="Goldstein S."/>
            <person name="She X."/>
            <person name="Bult C.J."/>
            <person name="Agarwala R."/>
            <person name="Cherry J.L."/>
            <person name="DiCuccio M."/>
            <person name="Hlavina W."/>
            <person name="Kapustin Y."/>
            <person name="Meric P."/>
            <person name="Maglott D."/>
            <person name="Birtle Z."/>
            <person name="Marques A.C."/>
            <person name="Graves T."/>
            <person name="Zhou S."/>
            <person name="Teague B."/>
            <person name="Potamousis K."/>
            <person name="Churas C."/>
            <person name="Place M."/>
            <person name="Herschleb J."/>
            <person name="Runnheim R."/>
            <person name="Forrest D."/>
            <person name="Amos-Landgraf J."/>
            <person name="Schwartz D.C."/>
            <person name="Cheng Z."/>
            <person name="Lindblad-Toh K."/>
            <person name="Eichler E.E."/>
            <person name="Ponting C.P."/>
        </authorList>
    </citation>
    <scope>NUCLEOTIDE SEQUENCE [LARGE SCALE GENOMIC DNA]</scope>
    <source>
        <strain>C57BL/6J</strain>
    </source>
</reference>
<reference key="3">
    <citation type="journal article" date="2005" name="Science">
        <title>The transcriptional landscape of the mammalian genome.</title>
        <authorList>
            <person name="Carninci P."/>
            <person name="Kasukawa T."/>
            <person name="Katayama S."/>
            <person name="Gough J."/>
            <person name="Frith M.C."/>
            <person name="Maeda N."/>
            <person name="Oyama R."/>
            <person name="Ravasi T."/>
            <person name="Lenhard B."/>
            <person name="Wells C."/>
            <person name="Kodzius R."/>
            <person name="Shimokawa K."/>
            <person name="Bajic V.B."/>
            <person name="Brenner S.E."/>
            <person name="Batalov S."/>
            <person name="Forrest A.R."/>
            <person name="Zavolan M."/>
            <person name="Davis M.J."/>
            <person name="Wilming L.G."/>
            <person name="Aidinis V."/>
            <person name="Allen J.E."/>
            <person name="Ambesi-Impiombato A."/>
            <person name="Apweiler R."/>
            <person name="Aturaliya R.N."/>
            <person name="Bailey T.L."/>
            <person name="Bansal M."/>
            <person name="Baxter L."/>
            <person name="Beisel K.W."/>
            <person name="Bersano T."/>
            <person name="Bono H."/>
            <person name="Chalk A.M."/>
            <person name="Chiu K.P."/>
            <person name="Choudhary V."/>
            <person name="Christoffels A."/>
            <person name="Clutterbuck D.R."/>
            <person name="Crowe M.L."/>
            <person name="Dalla E."/>
            <person name="Dalrymple B.P."/>
            <person name="de Bono B."/>
            <person name="Della Gatta G."/>
            <person name="di Bernardo D."/>
            <person name="Down T."/>
            <person name="Engstrom P."/>
            <person name="Fagiolini M."/>
            <person name="Faulkner G."/>
            <person name="Fletcher C.F."/>
            <person name="Fukushima T."/>
            <person name="Furuno M."/>
            <person name="Futaki S."/>
            <person name="Gariboldi M."/>
            <person name="Georgii-Hemming P."/>
            <person name="Gingeras T.R."/>
            <person name="Gojobori T."/>
            <person name="Green R.E."/>
            <person name="Gustincich S."/>
            <person name="Harbers M."/>
            <person name="Hayashi Y."/>
            <person name="Hensch T.K."/>
            <person name="Hirokawa N."/>
            <person name="Hill D."/>
            <person name="Huminiecki L."/>
            <person name="Iacono M."/>
            <person name="Ikeo K."/>
            <person name="Iwama A."/>
            <person name="Ishikawa T."/>
            <person name="Jakt M."/>
            <person name="Kanapin A."/>
            <person name="Katoh M."/>
            <person name="Kawasawa Y."/>
            <person name="Kelso J."/>
            <person name="Kitamura H."/>
            <person name="Kitano H."/>
            <person name="Kollias G."/>
            <person name="Krishnan S.P."/>
            <person name="Kruger A."/>
            <person name="Kummerfeld S.K."/>
            <person name="Kurochkin I.V."/>
            <person name="Lareau L.F."/>
            <person name="Lazarevic D."/>
            <person name="Lipovich L."/>
            <person name="Liu J."/>
            <person name="Liuni S."/>
            <person name="McWilliam S."/>
            <person name="Madan Babu M."/>
            <person name="Madera M."/>
            <person name="Marchionni L."/>
            <person name="Matsuda H."/>
            <person name="Matsuzawa S."/>
            <person name="Miki H."/>
            <person name="Mignone F."/>
            <person name="Miyake S."/>
            <person name="Morris K."/>
            <person name="Mottagui-Tabar S."/>
            <person name="Mulder N."/>
            <person name="Nakano N."/>
            <person name="Nakauchi H."/>
            <person name="Ng P."/>
            <person name="Nilsson R."/>
            <person name="Nishiguchi S."/>
            <person name="Nishikawa S."/>
            <person name="Nori F."/>
            <person name="Ohara O."/>
            <person name="Okazaki Y."/>
            <person name="Orlando V."/>
            <person name="Pang K.C."/>
            <person name="Pavan W.J."/>
            <person name="Pavesi G."/>
            <person name="Pesole G."/>
            <person name="Petrovsky N."/>
            <person name="Piazza S."/>
            <person name="Reed J."/>
            <person name="Reid J.F."/>
            <person name="Ring B.Z."/>
            <person name="Ringwald M."/>
            <person name="Rost B."/>
            <person name="Ruan Y."/>
            <person name="Salzberg S.L."/>
            <person name="Sandelin A."/>
            <person name="Schneider C."/>
            <person name="Schoenbach C."/>
            <person name="Sekiguchi K."/>
            <person name="Semple C.A."/>
            <person name="Seno S."/>
            <person name="Sessa L."/>
            <person name="Sheng Y."/>
            <person name="Shibata Y."/>
            <person name="Shimada H."/>
            <person name="Shimada K."/>
            <person name="Silva D."/>
            <person name="Sinclair B."/>
            <person name="Sperling S."/>
            <person name="Stupka E."/>
            <person name="Sugiura K."/>
            <person name="Sultana R."/>
            <person name="Takenaka Y."/>
            <person name="Taki K."/>
            <person name="Tammoja K."/>
            <person name="Tan S.L."/>
            <person name="Tang S."/>
            <person name="Taylor M.S."/>
            <person name="Tegner J."/>
            <person name="Teichmann S.A."/>
            <person name="Ueda H.R."/>
            <person name="van Nimwegen E."/>
            <person name="Verardo R."/>
            <person name="Wei C.L."/>
            <person name="Yagi K."/>
            <person name="Yamanishi H."/>
            <person name="Zabarovsky E."/>
            <person name="Zhu S."/>
            <person name="Zimmer A."/>
            <person name="Hide W."/>
            <person name="Bult C."/>
            <person name="Grimmond S.M."/>
            <person name="Teasdale R.D."/>
            <person name="Liu E.T."/>
            <person name="Brusic V."/>
            <person name="Quackenbush J."/>
            <person name="Wahlestedt C."/>
            <person name="Mattick J.S."/>
            <person name="Hume D.A."/>
            <person name="Kai C."/>
            <person name="Sasaki D."/>
            <person name="Tomaru Y."/>
            <person name="Fukuda S."/>
            <person name="Kanamori-Katayama M."/>
            <person name="Suzuki M."/>
            <person name="Aoki J."/>
            <person name="Arakawa T."/>
            <person name="Iida J."/>
            <person name="Imamura K."/>
            <person name="Itoh M."/>
            <person name="Kato T."/>
            <person name="Kawaji H."/>
            <person name="Kawagashira N."/>
            <person name="Kawashima T."/>
            <person name="Kojima M."/>
            <person name="Kondo S."/>
            <person name="Konno H."/>
            <person name="Nakano K."/>
            <person name="Ninomiya N."/>
            <person name="Nishio T."/>
            <person name="Okada M."/>
            <person name="Plessy C."/>
            <person name="Shibata K."/>
            <person name="Shiraki T."/>
            <person name="Suzuki S."/>
            <person name="Tagami M."/>
            <person name="Waki K."/>
            <person name="Watahiki A."/>
            <person name="Okamura-Oho Y."/>
            <person name="Suzuki H."/>
            <person name="Kawai J."/>
            <person name="Hayashizaki Y."/>
        </authorList>
    </citation>
    <scope>NUCLEOTIDE SEQUENCE [LARGE SCALE MRNA] OF 662-1066 AND 1741-2039</scope>
    <source>
        <strain>C57BL/6J</strain>
        <tissue>Liver</tissue>
        <tissue>Spinal cord</tissue>
    </source>
</reference>
<reference key="4">
    <citation type="journal article" date="2003" name="DNA Res.">
        <title>Prediction of the coding sequences of mouse homologues of KIAA gene: III. The complete nucleotide sequences of 500 mouse KIAA-homologous cDNAs identified by screening of terminal sequences of cDNA clones randomly sampled from size-fractionated libraries.</title>
        <authorList>
            <person name="Okazaki N."/>
            <person name="Kikuno R."/>
            <person name="Ohara R."/>
            <person name="Inamoto S."/>
            <person name="Koseki H."/>
            <person name="Hiraoka S."/>
            <person name="Saga Y."/>
            <person name="Nagase T."/>
            <person name="Ohara O."/>
            <person name="Koga H."/>
        </authorList>
    </citation>
    <scope>NUCLEOTIDE SEQUENCE [LARGE SCALE MRNA] OF 622-1981</scope>
    <source>
        <tissue>Embryonic tail</tissue>
    </source>
</reference>
<reference key="5">
    <citation type="journal article" date="2011" name="Cell">
        <title>Hydroxylation of 5-methylcytosine by TET1 promotes active DNA demethylation in the adult brain.</title>
        <authorList>
            <person name="Guo J.U."/>
            <person name="Su Y."/>
            <person name="Zhong C."/>
            <person name="Ming G.L."/>
            <person name="Song H."/>
        </authorList>
    </citation>
    <scope>FUNCTION IN DNA DEMETHYLATION</scope>
</reference>
<reference key="6">
    <citation type="journal article" date="2011" name="Cell Stem Cell">
        <title>Tet1 is dispensable for maintaining pluripotency and its loss is compatible with embryonic and postnatal development.</title>
        <authorList>
            <person name="Dawlaty M.M."/>
            <person name="Ganz K."/>
            <person name="Powell B.E."/>
            <person name="Hu Y.C."/>
            <person name="Markoulaki S."/>
            <person name="Cheng A.W."/>
            <person name="Gao Q."/>
            <person name="Kim J."/>
            <person name="Choi S.W."/>
            <person name="Page D.C."/>
            <person name="Jaenisch R."/>
        </authorList>
    </citation>
    <scope>DISRUPTION PHENOTYPE</scope>
</reference>
<reference key="7">
    <citation type="journal article" date="2011" name="Mol. Cell">
        <title>Genome-wide regulation of 5hmC, 5mC, and gene expression by Tet1 hydroxylase in mouse embryonic stem cells.</title>
        <authorList>
            <person name="Xu Y."/>
            <person name="Wu F."/>
            <person name="Tan L."/>
            <person name="Kong L."/>
            <person name="Xiong L."/>
            <person name="Deng J."/>
            <person name="Barbera A.J."/>
            <person name="Zheng L."/>
            <person name="Zhang H."/>
            <person name="Huang S."/>
            <person name="Min J."/>
            <person name="Nicholson T."/>
            <person name="Chen T."/>
            <person name="Xu G."/>
            <person name="Shi Y."/>
            <person name="Zhang K."/>
            <person name="Shi Y.G."/>
        </authorList>
    </citation>
    <scope>FUNCTION</scope>
</reference>
<reference key="8">
    <citation type="journal article" date="2011" name="Nature">
        <title>TET1 and hydroxymethylcytosine in transcription and DNA methylation fidelity.</title>
        <authorList>
            <person name="Williams K."/>
            <person name="Christensen J."/>
            <person name="Pedersen M.T."/>
            <person name="Johansen J.V."/>
            <person name="Cloos P.A."/>
            <person name="Rappsilber J."/>
            <person name="Helin K."/>
        </authorList>
    </citation>
    <scope>FUNCTION IN TRANSCRIPTIONAL REPRESSION</scope>
    <scope>INTERACTION WITH SIN3A</scope>
</reference>
<reference key="9">
    <citation type="journal article" date="2011" name="Nature">
        <title>Dual functions of Tet1 in transcriptional regulation in mouse embryonic stem cells.</title>
        <authorList>
            <person name="Wu H."/>
            <person name="D'Alessio A.C."/>
            <person name="Ito S."/>
            <person name="Xia K."/>
            <person name="Wang Z."/>
            <person name="Cui K."/>
            <person name="Zhao K."/>
            <person name="Eve Sun Y."/>
            <person name="Zhang Y."/>
        </authorList>
    </citation>
    <scope>FUNCTION IN TRANSCRIPTIONAL REPRESSION</scope>
</reference>
<reference key="10">
    <citation type="journal article" date="2011" name="Science">
        <title>Tet proteins can convert 5-methylcytosine to 5-formylcytosine and 5-carboxylcytosine.</title>
        <authorList>
            <person name="Ito S."/>
            <person name="Shen L."/>
            <person name="Dai Q."/>
            <person name="Wu S.C."/>
            <person name="Collins L.B."/>
            <person name="Swenberg J.A."/>
            <person name="He C."/>
            <person name="Zhang Y."/>
        </authorList>
    </citation>
    <scope>FUNCTION</scope>
    <scope>CATALYTIC ACTIVITY</scope>
    <scope>MUTAGENESIS OF HIS-1652 AND ASP-1654</scope>
</reference>
<reference key="11">
    <citation type="journal article" date="2012" name="Nature">
        <title>Tet1 controls meiosis by regulating meiotic gene expression.</title>
        <authorList>
            <person name="Yamaguchi S."/>
            <person name="Hong K."/>
            <person name="Liu R."/>
            <person name="Shen L."/>
            <person name="Inoue A."/>
            <person name="Diep D."/>
            <person name="Zhang K."/>
            <person name="Zhang Y."/>
        </authorList>
    </citation>
    <scope>FUNCTION</scope>
    <scope>DISRUPTION PHENOTYPE</scope>
    <scope>DEVELOPMENTAL STAGE</scope>
</reference>
<reference key="12">
    <citation type="journal article" date="2013" name="Dev. Cell">
        <title>Combined deficiency of tet1 and tet2 causes epigenetic abnormalities but is compatible with postnatal development.</title>
        <authorList>
            <person name="Dawlaty M.M."/>
            <person name="Breiling A."/>
            <person name="Le T."/>
            <person name="Raddatz G."/>
            <person name="Barrasa M.I."/>
            <person name="Cheng A.W."/>
            <person name="Gao Q."/>
            <person name="Powell B.E."/>
            <person name="Li Z."/>
            <person name="Xu M."/>
            <person name="Faull K.F."/>
            <person name="Lyko F."/>
            <person name="Jaenisch R."/>
        </authorList>
    </citation>
    <scope>DISRUPTION PHENOTYPE</scope>
</reference>
<reference key="13">
    <citation type="journal article" date="2013" name="Mol. Cell">
        <title>Tet proteins connect the O-linked N-acetylglucosamine transferase Ogt to chromatin in embryonic stem cells.</title>
        <authorList>
            <person name="Vella P."/>
            <person name="Scelfo A."/>
            <person name="Jammula S."/>
            <person name="Chiacchiera F."/>
            <person name="Williams K."/>
            <person name="Cuomo A."/>
            <person name="Roberto A."/>
            <person name="Christensen J."/>
            <person name="Bonaldi T."/>
            <person name="Helin K."/>
            <person name="Pasini D."/>
        </authorList>
    </citation>
    <scope>FUNCTION</scope>
    <scope>INTERACTION WITH OGT AND HCFC1</scope>
    <scope>GLYCOSYLATION</scope>
</reference>
<reference key="14">
    <citation type="journal article" date="2013" name="Science">
        <title>CRL4 complex regulates mammalian oocyte survival and reprogramming by activation of TET proteins.</title>
        <authorList>
            <person name="Yu C."/>
            <person name="Zhang Y.L."/>
            <person name="Pan W.W."/>
            <person name="Li X.M."/>
            <person name="Wang Z.W."/>
            <person name="Ge Z.J."/>
            <person name="Zhou J.J."/>
            <person name="Cang Y."/>
            <person name="Tong C."/>
            <person name="Sun Q.Y."/>
            <person name="Fan H.Y."/>
        </authorList>
    </citation>
    <scope>TISSUE SPECIFICITY</scope>
    <scope>DEVELOPMENTAL STAGE</scope>
</reference>
<reference key="15">
    <citation type="journal article" date="2014" name="Cell Rep.">
        <title>5-Hydroxymethylcytosine plays a critical role in glioblastomagenesis by recruiting the CHTOP-methylosome complex.</title>
        <authorList>
            <person name="Takai H."/>
            <person name="Masuda K."/>
            <person name="Sato T."/>
            <person name="Sakaguchi Y."/>
            <person name="Suzuki T."/>
            <person name="Suzuki T."/>
            <person name="Koyama-Nasu R."/>
            <person name="Nasu-Nishimura Y."/>
            <person name="Katou Y."/>
            <person name="Ogawa H."/>
            <person name="Morishita Y."/>
            <person name="Kozuka-Hata H."/>
            <person name="Oyama M."/>
            <person name="Todo T."/>
            <person name="Ino Y."/>
            <person name="Mukasa A."/>
            <person name="Saito N."/>
            <person name="Toyoshima C."/>
            <person name="Shirahige K."/>
            <person name="Akiyama T."/>
        </authorList>
    </citation>
    <scope>INVOLVEMENT IN GLIOBLASTOMA</scope>
</reference>
<reference key="16">
    <citation type="journal article" date="2015" name="Mol. Cell">
        <title>CRL4(VprBP) E3 ligase promotes monoubiquitylation and chromatin binding of TET dioxygenases.</title>
        <authorList>
            <person name="Nakagawa T."/>
            <person name="Lv L."/>
            <person name="Nakagawa M."/>
            <person name="Yu Y."/>
            <person name="Yu C."/>
            <person name="D'Alessio A.C."/>
            <person name="Nakayama K."/>
            <person name="Fan H.Y."/>
            <person name="Chen X."/>
            <person name="Xiong Y."/>
        </authorList>
    </citation>
    <scope>INTERACTION WITH DCAF1</scope>
    <scope>MONOUBIQUITINATION AT LYS-1537</scope>
    <scope>MUTAGENESIS OF LYS-1537; HIS-1652 AND ASP-1654</scope>
    <scope>SUBCELLULAR LOCATION</scope>
</reference>
<reference key="17">
    <citation type="journal article" date="2016" name="Mol. Cell">
        <title>Isoform switch of TET1 regulates DNA demethylation and mouse development.</title>
        <authorList>
            <person name="Zhang W."/>
            <person name="Xia W."/>
            <person name="Wang Q."/>
            <person name="Towers A.J."/>
            <person name="Chen J."/>
            <person name="Gao R."/>
            <person name="Zhang Y."/>
            <person name="Yen C.A."/>
            <person name="Lee A.Y."/>
            <person name="Li Y."/>
            <person name="Zhou C."/>
            <person name="Liu K."/>
            <person name="Zhang J."/>
            <person name="Gu T.P."/>
            <person name="Chen X."/>
            <person name="Chang Z."/>
            <person name="Leung D."/>
            <person name="Gao S."/>
            <person name="Jiang Y.H."/>
            <person name="Xie W."/>
        </authorList>
    </citation>
    <scope>FUNCTION</scope>
    <scope>INTERACTION WITH OGT</scope>
    <scope>SUBCELLULAR LOCATION</scope>
    <scope>TISSUE SPECIFICITY</scope>
    <scope>DEVELOPMENTAL STAGE</scope>
    <scope>DOMAIN</scope>
    <scope>ALTERNATIVE PROMOTER USAGE</scope>
    <scope>IDENTIFICATION OF ISOFORMS 1 AND 2</scope>
</reference>
<reference key="18">
    <citation type="journal article" date="2017" name="EMBO J.">
        <title>Fam60a defines a variant Sin3a-Hdac complex in embryonic stem cells required for self-renewal.</title>
        <authorList>
            <person name="Streubel G."/>
            <person name="Fitzpatrick D.J."/>
            <person name="Oliviero G."/>
            <person name="Scelfo A."/>
            <person name="Moran B."/>
            <person name="Das S."/>
            <person name="Munawar N."/>
            <person name="Watson A."/>
            <person name="Wynne K."/>
            <person name="Negri G.L."/>
            <person name="Dillon E.T."/>
            <person name="Jammula S."/>
            <person name="Hokamp K."/>
            <person name="O'Connor D.P."/>
            <person name="Pasini D."/>
            <person name="Cagney G."/>
            <person name="Bracken A.P."/>
        </authorList>
    </citation>
    <scope>IDENTIFICATION IN A COMPLEX WITH SIN3A; SINHCAF; HDAC1; RBBP4; SAP30 AND OGT</scope>
</reference>
<reference key="19">
    <citation type="journal article" date="2017" name="Nat. Genet.">
        <title>Lineage-specific functions of TET1 in the postimplantation mouse embryo.</title>
        <authorList>
            <person name="Khoueiry R."/>
            <person name="Sohni A."/>
            <person name="Thienpont B."/>
            <person name="Luo X."/>
            <person name="Velde J.V."/>
            <person name="Bartoccetti M."/>
            <person name="Boeckx B."/>
            <person name="Zwijsen A."/>
            <person name="Rao A."/>
            <person name="Lambrechts D."/>
            <person name="Koh K.P."/>
        </authorList>
    </citation>
    <scope>FUNCTION</scope>
    <scope>TISSUE SPECIFICITY</scope>
</reference>
<reference key="20">
    <citation type="journal article" date="2017" name="Nucleic Acids Res.">
        <title>A novel isoform of TET1 that lacks a CXXC domain is overexpressed in cancer.</title>
        <authorList>
            <person name="Good C.R."/>
            <person name="Madzo J."/>
            <person name="Patel B."/>
            <person name="Maegawa S."/>
            <person name="Engel N."/>
            <person name="Jelinek J."/>
            <person name="Issa J.J."/>
        </authorList>
    </citation>
    <scope>TISSUE SPECIFICITY</scope>
    <scope>IDENTIFICATION OF ISOFORMS 1 AND 2</scope>
</reference>
<reference key="21">
    <citation type="journal article" date="2017" name="Proc. Natl. Acad. Sci. U.S.A.">
        <title>An epigenetic switch repressing Tet1 in gonadotropes activates the reproductive axis.</title>
        <authorList>
            <person name="Yosefzon Y."/>
            <person name="David C."/>
            <person name="Tsukerman A."/>
            <person name="Pnueli L."/>
            <person name="Qiao S."/>
            <person name="Boehm U."/>
            <person name="Melamed P."/>
        </authorList>
    </citation>
    <scope>FUNCTION</scope>
    <scope>TISSUE SPECIFICITY</scope>
    <scope>DEVELOPMENTAL STAGE</scope>
    <scope>INDUCTION BY E2; DHT AND GNRH1</scope>
    <scope>IDENTIFICATION OF ISOFORMS 1 AND 2</scope>
    <scope>ALTERNATIVE PROMOTER USAGE</scope>
</reference>
<reference key="22">
    <citation type="journal article" date="2019" name="Sci. Rep.">
        <title>TET1 contributes to allergic airway inflammation and regulates interferon and aryl hydrocarbon receptor signaling pathways in bronchial epithelial cells.</title>
        <authorList>
            <person name="Burleson J.D."/>
            <person name="Siniard D."/>
            <person name="Yadagiri V.K."/>
            <person name="Chen X."/>
            <person name="Weirauch M.T."/>
            <person name="Ruff B.P."/>
            <person name="Brandt E.B."/>
            <person name="Hershey G.K.K."/>
            <person name="Ji H."/>
        </authorList>
    </citation>
    <scope>FUNCTION</scope>
    <scope>DISRUPTION PHENOTYPE</scope>
</reference>
<reference key="23">
    <citation type="journal article" date="2020" name="Nat. Commun.">
        <title>TET1 is a beige adipocyte-selective epigenetic suppressor of thermogenesis.</title>
        <authorList>
            <person name="Damal Villivalam S."/>
            <person name="You D."/>
            <person name="Kim J."/>
            <person name="Lim H.W."/>
            <person name="Xiao H."/>
            <person name="Zushin P.H."/>
            <person name="Oguri Y."/>
            <person name="Amin P."/>
            <person name="Kang S."/>
        </authorList>
    </citation>
    <scope>FUNCTION</scope>
    <scope>DISRUPTION PHENOTYPE</scope>
</reference>
<reference key="24">
    <citation type="journal article" date="2020" name="Nucleic Acids Res.">
        <title>Nono deficiency compromises TET1 chromatin association and impedes neuronal differentiation of mouse embryonic stem cells.</title>
        <authorList>
            <person name="Li W."/>
            <person name="Karwacki-Neisius V."/>
            <person name="Ma C."/>
            <person name="Tan L."/>
            <person name="Shi Y."/>
            <person name="Wu F."/>
            <person name="Shi Y.G."/>
        </authorList>
    </citation>
    <scope>FUNCTION</scope>
    <scope>INTERACTION WITH NONO</scope>
    <scope>SUBCELLULAR LOCATION</scope>
</reference>
<reference key="25">
    <citation type="journal article" date="2021" name="Blood">
        <title>RNF217 regulates iron homeostasis through its E3 ubiquitin ligase activity by modulating ferroportin degradation.</title>
        <authorList>
            <person name="Jiang L."/>
            <person name="Wang J."/>
            <person name="Wang K."/>
            <person name="Wang H."/>
            <person name="Wu Q."/>
            <person name="Yang C."/>
            <person name="Yu Y."/>
            <person name="Ni P."/>
            <person name="Zhong Y."/>
            <person name="Song Z."/>
            <person name="Xie E."/>
            <person name="Hu R."/>
            <person name="Min J."/>
            <person name="Wang F."/>
        </authorList>
    </citation>
    <scope>DISRUPTION PHENOTYPE</scope>
    <scope>FUNCTION</scope>
</reference>
<reference key="26">
    <citation type="journal article" date="2021" name="J. Neurosci.">
        <title>Tet1 Isoforms Differentially Regulate Gene Expression, Synaptic Transmission, and Memory in the Mammalian Brain.</title>
        <authorList>
            <person name="Greer C.B."/>
            <person name="Wright J."/>
            <person name="Weiss J.D."/>
            <person name="Lazarenko R.M."/>
            <person name="Moran S.P."/>
            <person name="Zhu J."/>
            <person name="Chronister K.S."/>
            <person name="Jin A.Y."/>
            <person name="Kennedy A.J."/>
            <person name="Sweatt J.D."/>
            <person name="Kaas G.A."/>
        </authorList>
    </citation>
    <scope>FUNCTION</scope>
    <scope>ALTERNATIVE PROMOTER USAGE</scope>
    <scope>IDENTIFICATION OF ISOFORMS 1 AND 2</scope>
    <scope>TISSUE SPECIFICITY</scope>
    <scope>INDUCTION (ISOFORM 2)</scope>
</reference>
<reference key="27">
    <citation type="journal article" date="2021" name="PLoS Genet.">
        <title>Tet1 regulates epigenetic remodeling of the pericentromeric heterochromatin and chromocenter organization in DNA hypomethylated cells.</title>
        <authorList>
            <person name="Hagihara Y."/>
            <person name="Asada S."/>
            <person name="Maeda T."/>
            <person name="Nakano T."/>
            <person name="Yamaguchi S."/>
        </authorList>
    </citation>
    <scope>FUNCTION</scope>
    <scope>INTERACTION WITH RNF2</scope>
    <scope>MUTAGENESIS OF HIS-1672 AND ASP-1674</scope>
</reference>
<reference key="28">
    <citation type="journal article" date="2022" name="Nat. Commun.">
        <title>Isoform-specific and ubiquitination dependent recruitment of Tet1 to replicating heterochromatin modulates methylcytosine oxidation.</title>
        <authorList>
            <person name="Arroyo M."/>
            <person name="Hastert F.D."/>
            <person name="Zhadan A."/>
            <person name="Schelter F."/>
            <person name="Zimbelmann S."/>
            <person name="Rausch C."/>
            <person name="Ludwig A.K."/>
            <person name="Carell T."/>
            <person name="Cardoso M.C."/>
        </authorList>
    </citation>
    <scope>FUNCTION</scope>
    <scope>INTERACTION WITH UHRF1</scope>
    <scope>SUBCELLULAR LOCATION</scope>
    <scope>UBIQUITINATION AT LYS-1537</scope>
    <scope>MUTAGENESIS OF LYS-1537; HIS-1672 AND ASP-1674</scope>
</reference>
<name>TET1_MOUSE</name>
<protein>
    <recommendedName>
        <fullName>Methylcytosine dioxygenase TET1</fullName>
        <ecNumber evidence="5 10">1.14.11.80</ecNumber>
    </recommendedName>
    <alternativeName>
        <fullName>CXXC-type zinc finger protein 6</fullName>
    </alternativeName>
    <alternativeName>
        <fullName>Ten-eleven translocation 1 gene protein homolog</fullName>
    </alternativeName>
</protein>